<dbReference type="EMBL" id="AF114169">
    <property type="protein sequence ID" value="AAF01785.1"/>
    <property type="molecule type" value="mRNA"/>
</dbReference>
<dbReference type="EMBL" id="AK003816">
    <property type="protein sequence ID" value="BAB23013.1"/>
    <property type="molecule type" value="mRNA"/>
</dbReference>
<dbReference type="EMBL" id="BC012635">
    <property type="protein sequence ID" value="AAH12635.1"/>
    <property type="molecule type" value="mRNA"/>
</dbReference>
<dbReference type="CCDS" id="CCDS28500.1"/>
<dbReference type="RefSeq" id="NP_036086.1">
    <property type="nucleotide sequence ID" value="NM_011956.3"/>
</dbReference>
<dbReference type="SMR" id="Q9R061"/>
<dbReference type="BioGRID" id="204978">
    <property type="interactions" value="3"/>
</dbReference>
<dbReference type="FunCoup" id="Q9R061">
    <property type="interactions" value="1301"/>
</dbReference>
<dbReference type="STRING" id="10090.ENSMUSP00000049319"/>
<dbReference type="GlyGen" id="Q9R061">
    <property type="glycosylation" value="1 site, 1 O-linked glycan (1 site)"/>
</dbReference>
<dbReference type="PhosphoSitePlus" id="Q9R061"/>
<dbReference type="SwissPalm" id="Q9R061"/>
<dbReference type="PaxDb" id="10090-ENSMUSP00000049319"/>
<dbReference type="PeptideAtlas" id="Q9R061"/>
<dbReference type="ProteomicsDB" id="293804"/>
<dbReference type="Pumba" id="Q9R061"/>
<dbReference type="Antibodypedia" id="23260">
    <property type="antibodies" value="85 antibodies from 19 providers"/>
</dbReference>
<dbReference type="Ensembl" id="ENSMUST00000044252.7">
    <property type="protein sequence ID" value="ENSMUSP00000049319.6"/>
    <property type="gene ID" value="ENSMUSG00000039183.7"/>
</dbReference>
<dbReference type="GeneID" id="26426"/>
<dbReference type="KEGG" id="mmu:26426"/>
<dbReference type="UCSC" id="uc008ayo.2">
    <property type="organism name" value="mouse"/>
</dbReference>
<dbReference type="AGR" id="MGI:1347072"/>
<dbReference type="CTD" id="10101"/>
<dbReference type="MGI" id="MGI:1347072">
    <property type="gene designation" value="Nubp2"/>
</dbReference>
<dbReference type="VEuPathDB" id="HostDB:ENSMUSG00000039183"/>
<dbReference type="eggNOG" id="KOG3022">
    <property type="taxonomic scope" value="Eukaryota"/>
</dbReference>
<dbReference type="GeneTree" id="ENSGT00950000183193"/>
<dbReference type="HOGENOM" id="CLU_024839_0_1_1"/>
<dbReference type="InParanoid" id="Q9R061"/>
<dbReference type="OMA" id="WIPVFAD"/>
<dbReference type="OrthoDB" id="1741334at2759"/>
<dbReference type="PhylomeDB" id="Q9R061"/>
<dbReference type="TreeFam" id="TF354321"/>
<dbReference type="BioGRID-ORCS" id="26426">
    <property type="hits" value="28 hits in 77 CRISPR screens"/>
</dbReference>
<dbReference type="PRO" id="PR:Q9R061"/>
<dbReference type="Proteomes" id="UP000000589">
    <property type="component" value="Chromosome 17"/>
</dbReference>
<dbReference type="RNAct" id="Q9R061">
    <property type="molecule type" value="protein"/>
</dbReference>
<dbReference type="Bgee" id="ENSMUSG00000039183">
    <property type="expression patterns" value="Expressed in spermatocyte and 250 other cell types or tissues"/>
</dbReference>
<dbReference type="ExpressionAtlas" id="Q9R061">
    <property type="expression patterns" value="baseline and differential"/>
</dbReference>
<dbReference type="GO" id="GO:0005814">
    <property type="term" value="C:centriole"/>
    <property type="evidence" value="ECO:0007669"/>
    <property type="project" value="UniProtKB-SubCell"/>
</dbReference>
<dbReference type="GO" id="GO:0005929">
    <property type="term" value="C:cilium"/>
    <property type="evidence" value="ECO:0007669"/>
    <property type="project" value="UniProtKB-KW"/>
</dbReference>
<dbReference type="GO" id="GO:0005829">
    <property type="term" value="C:cytosol"/>
    <property type="evidence" value="ECO:0007669"/>
    <property type="project" value="Ensembl"/>
</dbReference>
<dbReference type="GO" id="GO:0005654">
    <property type="term" value="C:nucleoplasm"/>
    <property type="evidence" value="ECO:0007669"/>
    <property type="project" value="Ensembl"/>
</dbReference>
<dbReference type="GO" id="GO:0005634">
    <property type="term" value="C:nucleus"/>
    <property type="evidence" value="ECO:0000314"/>
    <property type="project" value="MGI"/>
</dbReference>
<dbReference type="GO" id="GO:0031616">
    <property type="term" value="C:spindle pole centrosome"/>
    <property type="evidence" value="ECO:0000314"/>
    <property type="project" value="MGI"/>
</dbReference>
<dbReference type="GO" id="GO:0051539">
    <property type="term" value="F:4 iron, 4 sulfur cluster binding"/>
    <property type="evidence" value="ECO:0007669"/>
    <property type="project" value="UniProtKB-UniRule"/>
</dbReference>
<dbReference type="GO" id="GO:0005524">
    <property type="term" value="F:ATP binding"/>
    <property type="evidence" value="ECO:0007669"/>
    <property type="project" value="UniProtKB-KW"/>
</dbReference>
<dbReference type="GO" id="GO:0140663">
    <property type="term" value="F:ATP-dependent FeS chaperone activity"/>
    <property type="evidence" value="ECO:0007669"/>
    <property type="project" value="InterPro"/>
</dbReference>
<dbReference type="GO" id="GO:0046872">
    <property type="term" value="F:metal ion binding"/>
    <property type="evidence" value="ECO:0007669"/>
    <property type="project" value="UniProtKB-KW"/>
</dbReference>
<dbReference type="GO" id="GO:0030030">
    <property type="term" value="P:cell projection organization"/>
    <property type="evidence" value="ECO:0007669"/>
    <property type="project" value="UniProtKB-KW"/>
</dbReference>
<dbReference type="GO" id="GO:0016226">
    <property type="term" value="P:iron-sulfur cluster assembly"/>
    <property type="evidence" value="ECO:0007669"/>
    <property type="project" value="UniProtKB-UniRule"/>
</dbReference>
<dbReference type="CDD" id="cd02037">
    <property type="entry name" value="Mrp_NBP35"/>
    <property type="match status" value="1"/>
</dbReference>
<dbReference type="FunFam" id="3.40.50.300:FF:000796">
    <property type="entry name" value="Cytosolic Fe-S cluster assembly factor NUBP2"/>
    <property type="match status" value="1"/>
</dbReference>
<dbReference type="Gene3D" id="3.40.50.300">
    <property type="entry name" value="P-loop containing nucleotide triphosphate hydrolases"/>
    <property type="match status" value="1"/>
</dbReference>
<dbReference type="HAMAP" id="MF_02040">
    <property type="entry name" value="Mrp_NBP35"/>
    <property type="match status" value="1"/>
</dbReference>
<dbReference type="HAMAP" id="MF_03039">
    <property type="entry name" value="NUBP2"/>
    <property type="match status" value="1"/>
</dbReference>
<dbReference type="InterPro" id="IPR000808">
    <property type="entry name" value="Mrp-like_CS"/>
</dbReference>
<dbReference type="InterPro" id="IPR019591">
    <property type="entry name" value="Mrp/NBP35_ATP-bd"/>
</dbReference>
<dbReference type="InterPro" id="IPR028600">
    <property type="entry name" value="NUBP2/Cfd1_eukaryotes"/>
</dbReference>
<dbReference type="InterPro" id="IPR027417">
    <property type="entry name" value="P-loop_NTPase"/>
</dbReference>
<dbReference type="InterPro" id="IPR033756">
    <property type="entry name" value="YlxH/NBP35"/>
</dbReference>
<dbReference type="PANTHER" id="PTHR23264:SF19">
    <property type="entry name" value="CYTOSOLIC FE-S CLUSTER ASSEMBLY FACTOR NUBP2"/>
    <property type="match status" value="1"/>
</dbReference>
<dbReference type="PANTHER" id="PTHR23264">
    <property type="entry name" value="NUCLEOTIDE-BINDING PROTEIN NBP35 YEAST -RELATED"/>
    <property type="match status" value="1"/>
</dbReference>
<dbReference type="Pfam" id="PF10609">
    <property type="entry name" value="ParA"/>
    <property type="match status" value="1"/>
</dbReference>
<dbReference type="SUPFAM" id="SSF52540">
    <property type="entry name" value="P-loop containing nucleoside triphosphate hydrolases"/>
    <property type="match status" value="1"/>
</dbReference>
<dbReference type="PROSITE" id="PS01215">
    <property type="entry name" value="MRP"/>
    <property type="match status" value="1"/>
</dbReference>
<organism>
    <name type="scientific">Mus musculus</name>
    <name type="common">Mouse</name>
    <dbReference type="NCBI Taxonomy" id="10090"/>
    <lineage>
        <taxon>Eukaryota</taxon>
        <taxon>Metazoa</taxon>
        <taxon>Chordata</taxon>
        <taxon>Craniata</taxon>
        <taxon>Vertebrata</taxon>
        <taxon>Euteleostomi</taxon>
        <taxon>Mammalia</taxon>
        <taxon>Eutheria</taxon>
        <taxon>Euarchontoglires</taxon>
        <taxon>Glires</taxon>
        <taxon>Rodentia</taxon>
        <taxon>Myomorpha</taxon>
        <taxon>Muroidea</taxon>
        <taxon>Muridae</taxon>
        <taxon>Murinae</taxon>
        <taxon>Mus</taxon>
        <taxon>Mus</taxon>
    </lineage>
</organism>
<name>NUBP2_MOUSE</name>
<accession>Q9R061</accession>
<keyword id="KW-0004">4Fe-4S</keyword>
<keyword id="KW-0007">Acetylation</keyword>
<keyword id="KW-0067">ATP-binding</keyword>
<keyword id="KW-0966">Cell projection</keyword>
<keyword id="KW-0969">Cilium</keyword>
<keyword id="KW-0970">Cilium biogenesis/degradation</keyword>
<keyword id="KW-0963">Cytoplasm</keyword>
<keyword id="KW-0206">Cytoskeleton</keyword>
<keyword id="KW-0408">Iron</keyword>
<keyword id="KW-0411">Iron-sulfur</keyword>
<keyword id="KW-0479">Metal-binding</keyword>
<keyword id="KW-0547">Nucleotide-binding</keyword>
<keyword id="KW-0539">Nucleus</keyword>
<keyword id="KW-1185">Reference proteome</keyword>
<protein>
    <recommendedName>
        <fullName evidence="2">Cytosolic Fe-S cluster assembly factor NUBP2</fullName>
    </recommendedName>
    <alternativeName>
        <fullName evidence="2">Nucleotide-binding protein 2</fullName>
        <shortName evidence="2">NBP 2</shortName>
    </alternativeName>
</protein>
<feature type="chain" id="PRO_0000184946" description="Cytosolic Fe-S cluster assembly factor NUBP2">
    <location>
        <begin position="1"/>
        <end position="275"/>
    </location>
</feature>
<feature type="binding site" evidence="2">
    <location>
        <begin position="26"/>
        <end position="33"/>
    </location>
    <ligand>
        <name>ATP</name>
        <dbReference type="ChEBI" id="CHEBI:30616"/>
    </ligand>
</feature>
<feature type="binding site" evidence="2">
    <location>
        <position position="200"/>
    </location>
    <ligand>
        <name>[4Fe-4S] cluster</name>
        <dbReference type="ChEBI" id="CHEBI:49883"/>
        <note>ligand shared between dimeric partners</note>
    </ligand>
</feature>
<feature type="binding site" evidence="2">
    <location>
        <position position="203"/>
    </location>
    <ligand>
        <name>[4Fe-4S] cluster</name>
        <dbReference type="ChEBI" id="CHEBI:49883"/>
        <note>ligand shared between dimeric partners</note>
    </ligand>
</feature>
<feature type="modified residue" description="N-acetylmethionine" evidence="1 2">
    <location>
        <position position="1"/>
    </location>
</feature>
<comment type="function">
    <text evidence="2 4">Component of the cytosolic iron-sulfur (Fe/S) protein assembly (CIA) machinery. Required for maturation of extramitochondrial Fe-S proteins. The NUBP1-NUBP2 heterotetramer forms a Fe-S scaffold complex, mediating the de novo assembly of an Fe-S cluster and its transfer to target apoproteins. Negatively regulates cilium formation and structure (PubMed:23807208).</text>
</comment>
<comment type="cofactor">
    <cofactor evidence="2">
        <name>[4Fe-4S] cluster</name>
        <dbReference type="ChEBI" id="CHEBI:49883"/>
    </cofactor>
    <text evidence="2">Binds 4 [4Fe-4S] clusters per heterotetramer. Contains two stable clusters in the N-termini of NUBP1 and two labile, bridging clusters between subunits of the NUBP1-NUBP2 heterotetramer.</text>
</comment>
<comment type="subunit">
    <text evidence="2 3 4">Heterotetramer of 2 NUBP1 and 2 NUBP2 chains (By similarity). Interacts with KIFC1 (PubMed:16638812). Interacts with NUBP1 (PubMed:16638812, PubMed:23807208).</text>
</comment>
<comment type="subcellular location">
    <subcellularLocation>
        <location evidence="2 3">Nucleus</location>
    </subcellularLocation>
    <subcellularLocation>
        <location evidence="2 3">Cytoplasm</location>
        <location evidence="2 3">Cytoskeleton</location>
        <location evidence="2 3">Microtubule organizing center</location>
        <location evidence="2 3">Centrosome</location>
    </subcellularLocation>
    <subcellularLocation>
        <location evidence="4">Cytoplasm</location>
    </subcellularLocation>
    <subcellularLocation>
        <location evidence="4">Cytoplasm</location>
        <location evidence="4">Cytoskeleton</location>
        <location evidence="4">Cilium axoneme</location>
    </subcellularLocation>
    <subcellularLocation>
        <location evidence="4">Cytoplasm</location>
        <location evidence="4">Cytoskeleton</location>
        <location evidence="4">Microtubule organizing center</location>
        <location evidence="4">Centrosome</location>
        <location evidence="4">Centriole</location>
    </subcellularLocation>
    <subcellularLocation>
        <location evidence="4">Cytoplasm</location>
        <location evidence="4">Cytoskeleton</location>
        <location evidence="4">Microtubule organizing center</location>
    </subcellularLocation>
    <text evidence="2 4">Enriched at the centrosomes during mitosis (By similarity). Enriched in centrioles of microtubule asters during prophase, prometaphase and telophase stages of mitosis (PubMed:23807208). Localized at centrioles and in the nucleus at interphase (PubMed:23807208). Colocalizes with nubp-1 at prometaphase (PubMed:23807208).</text>
</comment>
<comment type="tissue specificity">
    <text>Widely expressed.</text>
</comment>
<comment type="developmental stage">
    <text>Expressed at 7, 11, 15 and 17 dpc.</text>
</comment>
<comment type="similarity">
    <text evidence="2">Belongs to the Mrp/NBP35 ATP-binding proteins family. NUBP2/CFD1 subfamily.</text>
</comment>
<sequence length="275" mass="29518">MEAAAGERAEPGNLAGVRHIILVLSGKGGVGKSTISTELALALRHQGKKVGILDVDLCGPSIPHMLRAQGKAVHQCDNGWVPVFVDQEQSISLMSVGFLLENPDEAVVWRGPKKHALIKQFVSDVAWGQLDYLVVDTPPGTSDEHMATMEALRPYRPLGALVVTTPQAVSIGDVRRELTFCKKTGLQVIGVIENMSGFTCPHCAECTNVFSSGSGEELARLAGVPFLGSVPLDSQLTRSLEEGRDFIQEFPKSTAYSALTSIAQRVVHRMSALCS</sequence>
<reference key="1">
    <citation type="journal article" date="1999" name="Genomics">
        <title>Two novel mouse genes -- Nubp2, mapped to the T-complex on chromosome 17, and Nubp1, mapped to chromosome 16 -- establish a new gene family of nucleotide-binding proteins in eukaryotes.</title>
        <authorList>
            <person name="Nakashima H."/>
            <person name="Grahovac M.J."/>
            <person name="Mazzarella R."/>
            <person name="Fujiwara H."/>
            <person name="Kitchen J.R."/>
            <person name="Threat T.A."/>
            <person name="Ko M.S.H."/>
        </authorList>
    </citation>
    <scope>NUCLEOTIDE SEQUENCE [MRNA]</scope>
    <source>
        <strain>C57BL/6J</strain>
        <tissue>Ectoplacental cone</tissue>
    </source>
</reference>
<reference key="2">
    <citation type="journal article" date="2005" name="Science">
        <title>The transcriptional landscape of the mammalian genome.</title>
        <authorList>
            <person name="Carninci P."/>
            <person name="Kasukawa T."/>
            <person name="Katayama S."/>
            <person name="Gough J."/>
            <person name="Frith M.C."/>
            <person name="Maeda N."/>
            <person name="Oyama R."/>
            <person name="Ravasi T."/>
            <person name="Lenhard B."/>
            <person name="Wells C."/>
            <person name="Kodzius R."/>
            <person name="Shimokawa K."/>
            <person name="Bajic V.B."/>
            <person name="Brenner S.E."/>
            <person name="Batalov S."/>
            <person name="Forrest A.R."/>
            <person name="Zavolan M."/>
            <person name="Davis M.J."/>
            <person name="Wilming L.G."/>
            <person name="Aidinis V."/>
            <person name="Allen J.E."/>
            <person name="Ambesi-Impiombato A."/>
            <person name="Apweiler R."/>
            <person name="Aturaliya R.N."/>
            <person name="Bailey T.L."/>
            <person name="Bansal M."/>
            <person name="Baxter L."/>
            <person name="Beisel K.W."/>
            <person name="Bersano T."/>
            <person name="Bono H."/>
            <person name="Chalk A.M."/>
            <person name="Chiu K.P."/>
            <person name="Choudhary V."/>
            <person name="Christoffels A."/>
            <person name="Clutterbuck D.R."/>
            <person name="Crowe M.L."/>
            <person name="Dalla E."/>
            <person name="Dalrymple B.P."/>
            <person name="de Bono B."/>
            <person name="Della Gatta G."/>
            <person name="di Bernardo D."/>
            <person name="Down T."/>
            <person name="Engstrom P."/>
            <person name="Fagiolini M."/>
            <person name="Faulkner G."/>
            <person name="Fletcher C.F."/>
            <person name="Fukushima T."/>
            <person name="Furuno M."/>
            <person name="Futaki S."/>
            <person name="Gariboldi M."/>
            <person name="Georgii-Hemming P."/>
            <person name="Gingeras T.R."/>
            <person name="Gojobori T."/>
            <person name="Green R.E."/>
            <person name="Gustincich S."/>
            <person name="Harbers M."/>
            <person name="Hayashi Y."/>
            <person name="Hensch T.K."/>
            <person name="Hirokawa N."/>
            <person name="Hill D."/>
            <person name="Huminiecki L."/>
            <person name="Iacono M."/>
            <person name="Ikeo K."/>
            <person name="Iwama A."/>
            <person name="Ishikawa T."/>
            <person name="Jakt M."/>
            <person name="Kanapin A."/>
            <person name="Katoh M."/>
            <person name="Kawasawa Y."/>
            <person name="Kelso J."/>
            <person name="Kitamura H."/>
            <person name="Kitano H."/>
            <person name="Kollias G."/>
            <person name="Krishnan S.P."/>
            <person name="Kruger A."/>
            <person name="Kummerfeld S.K."/>
            <person name="Kurochkin I.V."/>
            <person name="Lareau L.F."/>
            <person name="Lazarevic D."/>
            <person name="Lipovich L."/>
            <person name="Liu J."/>
            <person name="Liuni S."/>
            <person name="McWilliam S."/>
            <person name="Madan Babu M."/>
            <person name="Madera M."/>
            <person name="Marchionni L."/>
            <person name="Matsuda H."/>
            <person name="Matsuzawa S."/>
            <person name="Miki H."/>
            <person name="Mignone F."/>
            <person name="Miyake S."/>
            <person name="Morris K."/>
            <person name="Mottagui-Tabar S."/>
            <person name="Mulder N."/>
            <person name="Nakano N."/>
            <person name="Nakauchi H."/>
            <person name="Ng P."/>
            <person name="Nilsson R."/>
            <person name="Nishiguchi S."/>
            <person name="Nishikawa S."/>
            <person name="Nori F."/>
            <person name="Ohara O."/>
            <person name="Okazaki Y."/>
            <person name="Orlando V."/>
            <person name="Pang K.C."/>
            <person name="Pavan W.J."/>
            <person name="Pavesi G."/>
            <person name="Pesole G."/>
            <person name="Petrovsky N."/>
            <person name="Piazza S."/>
            <person name="Reed J."/>
            <person name="Reid J.F."/>
            <person name="Ring B.Z."/>
            <person name="Ringwald M."/>
            <person name="Rost B."/>
            <person name="Ruan Y."/>
            <person name="Salzberg S.L."/>
            <person name="Sandelin A."/>
            <person name="Schneider C."/>
            <person name="Schoenbach C."/>
            <person name="Sekiguchi K."/>
            <person name="Semple C.A."/>
            <person name="Seno S."/>
            <person name="Sessa L."/>
            <person name="Sheng Y."/>
            <person name="Shibata Y."/>
            <person name="Shimada H."/>
            <person name="Shimada K."/>
            <person name="Silva D."/>
            <person name="Sinclair B."/>
            <person name="Sperling S."/>
            <person name="Stupka E."/>
            <person name="Sugiura K."/>
            <person name="Sultana R."/>
            <person name="Takenaka Y."/>
            <person name="Taki K."/>
            <person name="Tammoja K."/>
            <person name="Tan S.L."/>
            <person name="Tang S."/>
            <person name="Taylor M.S."/>
            <person name="Tegner J."/>
            <person name="Teichmann S.A."/>
            <person name="Ueda H.R."/>
            <person name="van Nimwegen E."/>
            <person name="Verardo R."/>
            <person name="Wei C.L."/>
            <person name="Yagi K."/>
            <person name="Yamanishi H."/>
            <person name="Zabarovsky E."/>
            <person name="Zhu S."/>
            <person name="Zimmer A."/>
            <person name="Hide W."/>
            <person name="Bult C."/>
            <person name="Grimmond S.M."/>
            <person name="Teasdale R.D."/>
            <person name="Liu E.T."/>
            <person name="Brusic V."/>
            <person name="Quackenbush J."/>
            <person name="Wahlestedt C."/>
            <person name="Mattick J.S."/>
            <person name="Hume D.A."/>
            <person name="Kai C."/>
            <person name="Sasaki D."/>
            <person name="Tomaru Y."/>
            <person name="Fukuda S."/>
            <person name="Kanamori-Katayama M."/>
            <person name="Suzuki M."/>
            <person name="Aoki J."/>
            <person name="Arakawa T."/>
            <person name="Iida J."/>
            <person name="Imamura K."/>
            <person name="Itoh M."/>
            <person name="Kato T."/>
            <person name="Kawaji H."/>
            <person name="Kawagashira N."/>
            <person name="Kawashima T."/>
            <person name="Kojima M."/>
            <person name="Kondo S."/>
            <person name="Konno H."/>
            <person name="Nakano K."/>
            <person name="Ninomiya N."/>
            <person name="Nishio T."/>
            <person name="Okada M."/>
            <person name="Plessy C."/>
            <person name="Shibata K."/>
            <person name="Shiraki T."/>
            <person name="Suzuki S."/>
            <person name="Tagami M."/>
            <person name="Waki K."/>
            <person name="Watahiki A."/>
            <person name="Okamura-Oho Y."/>
            <person name="Suzuki H."/>
            <person name="Kawai J."/>
            <person name="Hayashizaki Y."/>
        </authorList>
    </citation>
    <scope>NUCLEOTIDE SEQUENCE [LARGE SCALE MRNA]</scope>
    <source>
        <strain>C57BL/6J</strain>
        <tissue>Embryo</tissue>
    </source>
</reference>
<reference key="3">
    <citation type="journal article" date="2004" name="Genome Res.">
        <title>The status, quality, and expansion of the NIH full-length cDNA project: the Mammalian Gene Collection (MGC).</title>
        <authorList>
            <consortium name="The MGC Project Team"/>
        </authorList>
    </citation>
    <scope>NUCLEOTIDE SEQUENCE [LARGE SCALE MRNA]</scope>
    <source>
        <strain>C57BL/6J</strain>
        <tissue>Mammary gland</tissue>
    </source>
</reference>
<reference key="4">
    <citation type="journal article" date="2006" name="J. Cell Sci.">
        <title>Motor protein KIFC5A interacts with Nubp1 and Nubp2, and is implicated in the regulation of centrosome duplication.</title>
        <authorList>
            <person name="Christodoulou A."/>
            <person name="Lederer C.W."/>
            <person name="Surrey T."/>
            <person name="Vernos I."/>
            <person name="Santama N."/>
        </authorList>
    </citation>
    <scope>INTERACTION WITH KIFC1 AND NUBP2</scope>
    <scope>SUBCELLULAR LOCATION</scope>
</reference>
<reference key="5">
    <citation type="journal article" date="2010" name="Cell">
        <title>A tissue-specific atlas of mouse protein phosphorylation and expression.</title>
        <authorList>
            <person name="Huttlin E.L."/>
            <person name="Jedrychowski M.P."/>
            <person name="Elias J.E."/>
            <person name="Goswami T."/>
            <person name="Rad R."/>
            <person name="Beausoleil S.A."/>
            <person name="Villen J."/>
            <person name="Haas W."/>
            <person name="Sowa M.E."/>
            <person name="Gygi S.P."/>
        </authorList>
    </citation>
    <scope>IDENTIFICATION BY MASS SPECTROMETRY [LARGE SCALE ANALYSIS]</scope>
    <source>
        <tissue>Brain</tissue>
        <tissue>Heart</tissue>
        <tissue>Kidney</tissue>
        <tissue>Liver</tissue>
        <tissue>Lung</tissue>
        <tissue>Spleen</tissue>
        <tissue>Testis</tissue>
    </source>
</reference>
<reference key="6">
    <citation type="journal article" date="2014" name="Cell. Mol. Life Sci.">
        <title>The nucleotide-binding proteins Nubp1 and Nubp2 are negative regulators of ciliogenesis.</title>
        <authorList>
            <person name="Kypri E."/>
            <person name="Christodoulou A."/>
            <person name="Maimaris G."/>
            <person name="Lethan M."/>
            <person name="Markaki M."/>
            <person name="Lysandrou C."/>
            <person name="Lederer C.W."/>
            <person name="Tavernarakis N."/>
            <person name="Geimer S."/>
            <person name="Pedersen L.B."/>
            <person name="Santama N."/>
        </authorList>
    </citation>
    <scope>FUNCTION</scope>
    <scope>INTERACTION WITH NUBP1</scope>
    <scope>SUBCELLULAR LOCATION</scope>
</reference>
<evidence type="ECO:0000250" key="1">
    <source>
        <dbReference type="UniProtKB" id="Q9Y5Y2"/>
    </source>
</evidence>
<evidence type="ECO:0000255" key="2">
    <source>
        <dbReference type="HAMAP-Rule" id="MF_03039"/>
    </source>
</evidence>
<evidence type="ECO:0000269" key="3">
    <source>
    </source>
</evidence>
<evidence type="ECO:0000269" key="4">
    <source>
    </source>
</evidence>
<gene>
    <name type="primary">Nubp2</name>
</gene>
<proteinExistence type="evidence at protein level"/>